<feature type="chain" id="PRO_0000140025" description="Ribonuclease P protein component 2">
    <location>
        <begin position="1"/>
        <end position="118"/>
    </location>
</feature>
<gene>
    <name evidence="1" type="primary">rnp2</name>
    <name type="ordered locus">PYRAB06860</name>
    <name type="ORF">PAB0467</name>
</gene>
<reference key="1">
    <citation type="journal article" date="2003" name="Mol. Microbiol.">
        <title>An integrated analysis of the genome of the hyperthermophilic archaeon Pyrococcus abyssi.</title>
        <authorList>
            <person name="Cohen G.N."/>
            <person name="Barbe V."/>
            <person name="Flament D."/>
            <person name="Galperin M."/>
            <person name="Heilig R."/>
            <person name="Lecompte O."/>
            <person name="Poch O."/>
            <person name="Prieur D."/>
            <person name="Querellou J."/>
            <person name="Ripp R."/>
            <person name="Thierry J.-C."/>
            <person name="Van der Oost J."/>
            <person name="Weissenbach J."/>
            <person name="Zivanovic Y."/>
            <person name="Forterre P."/>
        </authorList>
    </citation>
    <scope>NUCLEOTIDE SEQUENCE [LARGE SCALE GENOMIC DNA]</scope>
    <source>
        <strain>GE5 / Orsay</strain>
    </source>
</reference>
<reference key="2">
    <citation type="journal article" date="2012" name="Curr. Microbiol.">
        <title>Re-annotation of two hyperthermophilic archaea Pyrococcus abyssi GE5 and Pyrococcus furiosus DSM 3638.</title>
        <authorList>
            <person name="Gao J."/>
            <person name="Wang J."/>
        </authorList>
    </citation>
    <scope>GENOME REANNOTATION</scope>
    <source>
        <strain>GE5 / Orsay</strain>
    </source>
</reference>
<sequence length="118" mass="13780">MKLKTLPPTLRDKNRYIAFEIISDDEFTKDEVKSLIWEASLRVLGELGTALAKPWFIKYDPKTKTGIVRCDREYVEHLRFALMLATDFNGKRLIIRTLGVSGTIKRLKKKFLSQYGWK</sequence>
<organism>
    <name type="scientific">Pyrococcus abyssi (strain GE5 / Orsay)</name>
    <dbReference type="NCBI Taxonomy" id="272844"/>
    <lineage>
        <taxon>Archaea</taxon>
        <taxon>Methanobacteriati</taxon>
        <taxon>Methanobacteriota</taxon>
        <taxon>Thermococci</taxon>
        <taxon>Thermococcales</taxon>
        <taxon>Thermococcaceae</taxon>
        <taxon>Pyrococcus</taxon>
    </lineage>
</organism>
<keyword id="KW-0963">Cytoplasm</keyword>
<keyword id="KW-0255">Endonuclease</keyword>
<keyword id="KW-0378">Hydrolase</keyword>
<keyword id="KW-0540">Nuclease</keyword>
<keyword id="KW-0819">tRNA processing</keyword>
<accession>Q9V0V4</accession>
<accession>G8ZJE8</accession>
<dbReference type="EC" id="3.1.26.5" evidence="1"/>
<dbReference type="EMBL" id="AJ248285">
    <property type="protein sequence ID" value="CAB49599.1"/>
    <property type="status" value="ALT_INIT"/>
    <property type="molecule type" value="Genomic_DNA"/>
</dbReference>
<dbReference type="EMBL" id="HE613800">
    <property type="protein sequence ID" value="CCE70075.1"/>
    <property type="molecule type" value="Genomic_DNA"/>
</dbReference>
<dbReference type="PIR" id="F75110">
    <property type="entry name" value="F75110"/>
</dbReference>
<dbReference type="RefSeq" id="WP_048146610.1">
    <property type="nucleotide sequence ID" value="NC_000868.1"/>
</dbReference>
<dbReference type="SMR" id="Q9V0V4"/>
<dbReference type="STRING" id="272844.PAB0467"/>
<dbReference type="KEGG" id="pab:PAB0467"/>
<dbReference type="PATRIC" id="fig|272844.11.peg.720"/>
<dbReference type="eggNOG" id="arCOG01365">
    <property type="taxonomic scope" value="Archaea"/>
</dbReference>
<dbReference type="HOGENOM" id="CLU_137733_1_0_2"/>
<dbReference type="OrthoDB" id="19261at2157"/>
<dbReference type="Proteomes" id="UP000000810">
    <property type="component" value="Chromosome"/>
</dbReference>
<dbReference type="Proteomes" id="UP000009139">
    <property type="component" value="Chromosome"/>
</dbReference>
<dbReference type="GO" id="GO:0005737">
    <property type="term" value="C:cytoplasm"/>
    <property type="evidence" value="ECO:0007669"/>
    <property type="project" value="UniProtKB-SubCell"/>
</dbReference>
<dbReference type="GO" id="GO:0030677">
    <property type="term" value="C:ribonuclease P complex"/>
    <property type="evidence" value="ECO:0007669"/>
    <property type="project" value="UniProtKB-UniRule"/>
</dbReference>
<dbReference type="GO" id="GO:0004526">
    <property type="term" value="F:ribonuclease P activity"/>
    <property type="evidence" value="ECO:0007669"/>
    <property type="project" value="UniProtKB-UniRule"/>
</dbReference>
<dbReference type="GO" id="GO:0001682">
    <property type="term" value="P:tRNA 5'-leader removal"/>
    <property type="evidence" value="ECO:0007669"/>
    <property type="project" value="UniProtKB-UniRule"/>
</dbReference>
<dbReference type="Gene3D" id="3.30.70.3250">
    <property type="entry name" value="Ribonuclease P, Pop5 subunit"/>
    <property type="match status" value="1"/>
</dbReference>
<dbReference type="HAMAP" id="MF_00755">
    <property type="entry name" value="RNase_P_2"/>
    <property type="match status" value="1"/>
</dbReference>
<dbReference type="InterPro" id="IPR002759">
    <property type="entry name" value="Pop5/Rpp14/Rnp2-like"/>
</dbReference>
<dbReference type="InterPro" id="IPR038085">
    <property type="entry name" value="Rnp2-like_sf"/>
</dbReference>
<dbReference type="InterPro" id="IPR016434">
    <property type="entry name" value="Rnp2_archaea"/>
</dbReference>
<dbReference type="NCBIfam" id="NF002986">
    <property type="entry name" value="PRK03717.1"/>
    <property type="match status" value="1"/>
</dbReference>
<dbReference type="PANTHER" id="PTHR15441">
    <property type="entry name" value="RIBONUCLEASE P PROTEIN SUBUNIT P14"/>
    <property type="match status" value="1"/>
</dbReference>
<dbReference type="PANTHER" id="PTHR15441:SF2">
    <property type="entry name" value="RIBONUCLEASE P_MRP PROTEIN SUBUNIT POP5"/>
    <property type="match status" value="1"/>
</dbReference>
<dbReference type="Pfam" id="PF01900">
    <property type="entry name" value="RNase_P_Rpp14"/>
    <property type="match status" value="1"/>
</dbReference>
<dbReference type="PIRSF" id="PIRSF004952">
    <property type="entry name" value="RNase_P_2"/>
    <property type="match status" value="1"/>
</dbReference>
<dbReference type="SUPFAM" id="SSF160350">
    <property type="entry name" value="Rnp2-like"/>
    <property type="match status" value="1"/>
</dbReference>
<proteinExistence type="inferred from homology"/>
<name>RNP2_PYRAB</name>
<protein>
    <recommendedName>
        <fullName evidence="1">Ribonuclease P protein component 2</fullName>
        <shortName evidence="1">RNase P component 2</shortName>
        <ecNumber evidence="1">3.1.26.5</ecNumber>
    </recommendedName>
    <alternativeName>
        <fullName evidence="1">Pop5</fullName>
    </alternativeName>
</protein>
<evidence type="ECO:0000255" key="1">
    <source>
        <dbReference type="HAMAP-Rule" id="MF_00755"/>
    </source>
</evidence>
<evidence type="ECO:0000305" key="2"/>
<comment type="function">
    <text evidence="1">Part of ribonuclease P, a protein complex that generates mature tRNA molecules by cleaving their 5'-ends.</text>
</comment>
<comment type="catalytic activity">
    <reaction evidence="1">
        <text>Endonucleolytic cleavage of RNA, removing 5'-extranucleotides from tRNA precursor.</text>
        <dbReference type="EC" id="3.1.26.5"/>
    </reaction>
</comment>
<comment type="subunit">
    <text evidence="1">Consists of a catalytic RNA component and at least 4-5 protein subunits.</text>
</comment>
<comment type="subcellular location">
    <subcellularLocation>
        <location evidence="1">Cytoplasm</location>
    </subcellularLocation>
</comment>
<comment type="similarity">
    <text evidence="1">Belongs to the eukaryotic/archaeal RNase P protein component 2 family.</text>
</comment>
<comment type="sequence caution" evidence="2">
    <conflict type="erroneous initiation">
        <sequence resource="EMBL-CDS" id="CAB49599"/>
    </conflict>
    <text>Extended N-terminus.</text>
</comment>